<evidence type="ECO:0000255" key="1">
    <source>
        <dbReference type="HAMAP-Rule" id="MF_00509"/>
    </source>
</evidence>
<gene>
    <name evidence="1" type="primary">zipA</name>
    <name type="ordered locus">HD_0831</name>
</gene>
<comment type="function">
    <text evidence="1">Essential cell division protein that stabilizes the FtsZ protofilaments by cross-linking them and that serves as a cytoplasmic membrane anchor for the Z ring. Also required for the recruitment to the septal ring of downstream cell division proteins.</text>
</comment>
<comment type="subunit">
    <text evidence="1">Interacts with FtsZ via their C-terminal domains.</text>
</comment>
<comment type="subcellular location">
    <subcellularLocation>
        <location evidence="1">Cell inner membrane</location>
        <topology evidence="1">Single-pass type I membrane protein</topology>
    </subcellularLocation>
    <text evidence="1">Localizes to the Z ring in an FtsZ-dependent manner.</text>
</comment>
<comment type="similarity">
    <text evidence="1">Belongs to the ZipA family.</text>
</comment>
<keyword id="KW-0131">Cell cycle</keyword>
<keyword id="KW-0132">Cell division</keyword>
<keyword id="KW-0997">Cell inner membrane</keyword>
<keyword id="KW-1003">Cell membrane</keyword>
<keyword id="KW-0472">Membrane</keyword>
<keyword id="KW-1185">Reference proteome</keyword>
<keyword id="KW-0812">Transmembrane</keyword>
<keyword id="KW-1133">Transmembrane helix</keyword>
<proteinExistence type="inferred from homology"/>
<accession>Q7VMX6</accession>
<feature type="chain" id="PRO_0000214525" description="Cell division protein ZipA">
    <location>
        <begin position="1"/>
        <end position="334"/>
    </location>
</feature>
<feature type="topological domain" description="Periplasmic" evidence="1">
    <location>
        <begin position="1"/>
        <end position="2"/>
    </location>
</feature>
<feature type="transmembrane region" description="Helical" evidence="1">
    <location>
        <begin position="3"/>
        <end position="23"/>
    </location>
</feature>
<feature type="topological domain" description="Cytoplasmic" evidence="1">
    <location>
        <begin position="24"/>
        <end position="334"/>
    </location>
</feature>
<protein>
    <recommendedName>
        <fullName evidence="1">Cell division protein ZipA</fullName>
    </recommendedName>
</protein>
<reference key="1">
    <citation type="submission" date="2003-06" db="EMBL/GenBank/DDBJ databases">
        <title>The complete genome sequence of Haemophilus ducreyi.</title>
        <authorList>
            <person name="Munson R.S. Jr."/>
            <person name="Ray W.C."/>
            <person name="Mahairas G."/>
            <person name="Sabo P."/>
            <person name="Mungur R."/>
            <person name="Johnson L."/>
            <person name="Nguyen D."/>
            <person name="Wang J."/>
            <person name="Forst C."/>
            <person name="Hood L."/>
        </authorList>
    </citation>
    <scope>NUCLEOTIDE SEQUENCE [LARGE SCALE GENOMIC DNA]</scope>
    <source>
        <strain>35000HP / ATCC 700724</strain>
    </source>
</reference>
<dbReference type="EMBL" id="AE017143">
    <property type="protein sequence ID" value="AAP95726.1"/>
    <property type="molecule type" value="Genomic_DNA"/>
</dbReference>
<dbReference type="RefSeq" id="WP_010944776.1">
    <property type="nucleotide sequence ID" value="NC_002940.2"/>
</dbReference>
<dbReference type="SMR" id="Q7VMX6"/>
<dbReference type="STRING" id="233412.HD_0831"/>
<dbReference type="KEGG" id="hdu:HD_0831"/>
<dbReference type="eggNOG" id="COG3115">
    <property type="taxonomic scope" value="Bacteria"/>
</dbReference>
<dbReference type="HOGENOM" id="CLU_030174_1_0_6"/>
<dbReference type="OrthoDB" id="7054914at2"/>
<dbReference type="Proteomes" id="UP000001022">
    <property type="component" value="Chromosome"/>
</dbReference>
<dbReference type="GO" id="GO:0032153">
    <property type="term" value="C:cell division site"/>
    <property type="evidence" value="ECO:0007669"/>
    <property type="project" value="UniProtKB-UniRule"/>
</dbReference>
<dbReference type="GO" id="GO:0005886">
    <property type="term" value="C:plasma membrane"/>
    <property type="evidence" value="ECO:0007669"/>
    <property type="project" value="UniProtKB-SubCell"/>
</dbReference>
<dbReference type="GO" id="GO:0000917">
    <property type="term" value="P:division septum assembly"/>
    <property type="evidence" value="ECO:0007669"/>
    <property type="project" value="TreeGrafter"/>
</dbReference>
<dbReference type="GO" id="GO:0043093">
    <property type="term" value="P:FtsZ-dependent cytokinesis"/>
    <property type="evidence" value="ECO:0007669"/>
    <property type="project" value="UniProtKB-UniRule"/>
</dbReference>
<dbReference type="Gene3D" id="3.30.1400.10">
    <property type="entry name" value="ZipA, C-terminal FtsZ-binding domain"/>
    <property type="match status" value="1"/>
</dbReference>
<dbReference type="HAMAP" id="MF_00509">
    <property type="entry name" value="ZipA"/>
    <property type="match status" value="1"/>
</dbReference>
<dbReference type="InterPro" id="IPR011919">
    <property type="entry name" value="Cell_div_ZipA"/>
</dbReference>
<dbReference type="InterPro" id="IPR007449">
    <property type="entry name" value="ZipA_FtsZ-bd_C"/>
</dbReference>
<dbReference type="InterPro" id="IPR036765">
    <property type="entry name" value="ZipA_FtsZ-bd_C_sf"/>
</dbReference>
<dbReference type="NCBIfam" id="TIGR02205">
    <property type="entry name" value="septum_zipA"/>
    <property type="match status" value="1"/>
</dbReference>
<dbReference type="PANTHER" id="PTHR38685">
    <property type="entry name" value="CELL DIVISION PROTEIN ZIPA"/>
    <property type="match status" value="1"/>
</dbReference>
<dbReference type="PANTHER" id="PTHR38685:SF1">
    <property type="entry name" value="CELL DIVISION PROTEIN ZIPA"/>
    <property type="match status" value="1"/>
</dbReference>
<dbReference type="Pfam" id="PF04354">
    <property type="entry name" value="ZipA_C"/>
    <property type="match status" value="1"/>
</dbReference>
<dbReference type="SMART" id="SM00771">
    <property type="entry name" value="ZipA_C"/>
    <property type="match status" value="1"/>
</dbReference>
<dbReference type="SUPFAM" id="SSF64383">
    <property type="entry name" value="Cell-division protein ZipA, C-terminal domain"/>
    <property type="match status" value="1"/>
</dbReference>
<organism>
    <name type="scientific">Haemophilus ducreyi (strain 35000HP / ATCC 700724)</name>
    <dbReference type="NCBI Taxonomy" id="233412"/>
    <lineage>
        <taxon>Bacteria</taxon>
        <taxon>Pseudomonadati</taxon>
        <taxon>Pseudomonadota</taxon>
        <taxon>Gammaproteobacteria</taxon>
        <taxon>Pasteurellales</taxon>
        <taxon>Pasteurellaceae</taxon>
        <taxon>Haemophilus</taxon>
    </lineage>
</organism>
<sequence length="334" mass="37387">MELHIIFLILGGLLIVLLAGFSIYSARREKSRIFSNTFTTRQPATPIKNIVTDVPATLDPLQYGQNPVPTENESESETGHSVQIQQEVENSLREIKINLPVQETAEYTQTPLNTPIYHNQPAQPTFLQTAPPIEPLTIPTVEPIQPETTSVLEQSLEELERQAAERELDLYSDASVRIELAKNSIQTPIEEVAQPESTVITQNNIITLYVVAPEGQQFDGHYVVQSLEALGFQFGEYQIYHRHQHLGNNDTPVIFSVANMMQPGIFDLNNLDSYATVGLVLFMHLPSEGSDLVNLKLMLKAAESLAEALGGFILNEQRELFNETDRQAYFARVS</sequence>
<name>ZIPA_HAEDU</name>